<reference key="1">
    <citation type="journal article" date="2007" name="Genome Biol.">
        <title>Characterization and modeling of the Haemophilus influenzae core and supragenomes based on the complete genomic sequences of Rd and 12 clinical nontypeable strains.</title>
        <authorList>
            <person name="Hogg J.S."/>
            <person name="Hu F.Z."/>
            <person name="Janto B."/>
            <person name="Boissy R."/>
            <person name="Hayes J."/>
            <person name="Keefe R."/>
            <person name="Post J.C."/>
            <person name="Ehrlich G.D."/>
        </authorList>
    </citation>
    <scope>NUCLEOTIDE SEQUENCE [LARGE SCALE GENOMIC DNA]</scope>
    <source>
        <strain>PittGG</strain>
    </source>
</reference>
<protein>
    <recommendedName>
        <fullName evidence="1">Deoxyguanosinetriphosphate triphosphohydrolase-like protein</fullName>
    </recommendedName>
</protein>
<accession>A5UF19</accession>
<comment type="similarity">
    <text evidence="1">Belongs to the dGTPase family. Type 2 subfamily.</text>
</comment>
<dbReference type="EMBL" id="CP000672">
    <property type="protein sequence ID" value="ABQ99374.1"/>
    <property type="molecule type" value="Genomic_DNA"/>
</dbReference>
<dbReference type="SMR" id="A5UF19"/>
<dbReference type="KEGG" id="hiq:CGSHiGG_01465"/>
<dbReference type="HOGENOM" id="CLU_028163_0_0_6"/>
<dbReference type="Proteomes" id="UP000001990">
    <property type="component" value="Chromosome"/>
</dbReference>
<dbReference type="GO" id="GO:0008832">
    <property type="term" value="F:dGTPase activity"/>
    <property type="evidence" value="ECO:0007669"/>
    <property type="project" value="TreeGrafter"/>
</dbReference>
<dbReference type="GO" id="GO:0006203">
    <property type="term" value="P:dGTP catabolic process"/>
    <property type="evidence" value="ECO:0007669"/>
    <property type="project" value="TreeGrafter"/>
</dbReference>
<dbReference type="Gene3D" id="1.10.3210.10">
    <property type="entry name" value="Hypothetical protein af1432"/>
    <property type="match status" value="2"/>
</dbReference>
<dbReference type="HAMAP" id="MF_01212">
    <property type="entry name" value="dGTPase_type2"/>
    <property type="match status" value="1"/>
</dbReference>
<dbReference type="InterPro" id="IPR006261">
    <property type="entry name" value="dGTPase"/>
</dbReference>
<dbReference type="InterPro" id="IPR050135">
    <property type="entry name" value="dGTPase-like"/>
</dbReference>
<dbReference type="InterPro" id="IPR023023">
    <property type="entry name" value="dNTPase_2"/>
</dbReference>
<dbReference type="InterPro" id="IPR003607">
    <property type="entry name" value="HD/PDEase_dom"/>
</dbReference>
<dbReference type="InterPro" id="IPR006674">
    <property type="entry name" value="HD_domain"/>
</dbReference>
<dbReference type="InterPro" id="IPR026875">
    <property type="entry name" value="PHydrolase_assoc_dom"/>
</dbReference>
<dbReference type="NCBIfam" id="NF041026">
    <property type="entry name" value="antiphage_dGTPase"/>
    <property type="match status" value="1"/>
</dbReference>
<dbReference type="NCBIfam" id="TIGR01353">
    <property type="entry name" value="dGTP_triPase"/>
    <property type="match status" value="1"/>
</dbReference>
<dbReference type="NCBIfam" id="NF003701">
    <property type="entry name" value="PRK05318.1"/>
    <property type="match status" value="1"/>
</dbReference>
<dbReference type="PANTHER" id="PTHR11373:SF40">
    <property type="entry name" value="DEOXYGUANOSINETRIPHOSPHATE TRIPHOSPHOHYDROLASE-LIKE PROTEIN 2"/>
    <property type="match status" value="1"/>
</dbReference>
<dbReference type="PANTHER" id="PTHR11373">
    <property type="entry name" value="DEOXYNUCLEOSIDE TRIPHOSPHATE TRIPHOSPHOHYDROLASE"/>
    <property type="match status" value="1"/>
</dbReference>
<dbReference type="Pfam" id="PF01966">
    <property type="entry name" value="HD"/>
    <property type="match status" value="1"/>
</dbReference>
<dbReference type="Pfam" id="PF13286">
    <property type="entry name" value="HD_assoc"/>
    <property type="match status" value="1"/>
</dbReference>
<dbReference type="SMART" id="SM00471">
    <property type="entry name" value="HDc"/>
    <property type="match status" value="1"/>
</dbReference>
<dbReference type="SUPFAM" id="SSF109604">
    <property type="entry name" value="HD-domain/PDEase-like"/>
    <property type="match status" value="1"/>
</dbReference>
<dbReference type="PROSITE" id="PS51831">
    <property type="entry name" value="HD"/>
    <property type="match status" value="1"/>
</dbReference>
<name>DGTL1_HAEIG</name>
<proteinExistence type="inferred from homology"/>
<sequence length="461" mass="53478">MQKNEIKQIDMKPLIIDSSWTERFLPDPPREKDNRPPFRRDRGRILHSAAFRCLQAKTQIHSIGENDFYRTRLTHSLEVAQIGSSLVAQLKFLETFESLSQTLNIDKNELQKQLKPLLPSNDLIESLCFAHDIGHPPFGHGGETALNYMMAEQGGFEGNAQTFRILTKLEPYTENAGMNLTRRTLLGVVKYPALLDVASPQYAELNFSRNIDARFVRIHDWIPGKGIFRDDLKMFNWLLENLSENDRTLFCQFKKVRENPAESLHTRFKSLDCSIMELADDIAYGVHDLEDAIVTGMVNPHQWQAAHSALKQIPSAWLHENIDSISQRLFSDKHFERKQAIGALVNFFITNVRWKLTANFDEPLLRYNAELSPEVIVALGVFKKFVWDYVIRNVDTQRIEYKGQRMLTEMFQIFESDPERLLPRNTANRWRNAPEERKKRIICDYIAGMSDAHALRVYQQL</sequence>
<organism>
    <name type="scientific">Haemophilus influenzae (strain PittGG)</name>
    <dbReference type="NCBI Taxonomy" id="374931"/>
    <lineage>
        <taxon>Bacteria</taxon>
        <taxon>Pseudomonadati</taxon>
        <taxon>Pseudomonadota</taxon>
        <taxon>Gammaproteobacteria</taxon>
        <taxon>Pasteurellales</taxon>
        <taxon>Pasteurellaceae</taxon>
        <taxon>Haemophilus</taxon>
    </lineage>
</organism>
<feature type="chain" id="PRO_1000073115" description="Deoxyguanosinetriphosphate triphosphohydrolase-like protein">
    <location>
        <begin position="1"/>
        <end position="461"/>
    </location>
</feature>
<feature type="domain" description="HD" evidence="2">
    <location>
        <begin position="72"/>
        <end position="285"/>
    </location>
</feature>
<feature type="region of interest" description="Disordered" evidence="3">
    <location>
        <begin position="22"/>
        <end position="41"/>
    </location>
</feature>
<feature type="compositionally biased region" description="Basic and acidic residues" evidence="3">
    <location>
        <begin position="24"/>
        <end position="41"/>
    </location>
</feature>
<evidence type="ECO:0000255" key="1">
    <source>
        <dbReference type="HAMAP-Rule" id="MF_01212"/>
    </source>
</evidence>
<evidence type="ECO:0000255" key="2">
    <source>
        <dbReference type="PROSITE-ProRule" id="PRU01175"/>
    </source>
</evidence>
<evidence type="ECO:0000256" key="3">
    <source>
        <dbReference type="SAM" id="MobiDB-lite"/>
    </source>
</evidence>
<keyword id="KW-0378">Hydrolase</keyword>
<gene>
    <name type="ordered locus">CGSHiGG_01465</name>
</gene>